<accession>P46378</accession>
<sequence length="198" mass="21057">MNLRPMPATTVSAQARPTPKSVTVFCGAMPGRGTKYGQLAEGMGRAIARSKLRLVYGGARVGLMGTLANAALDSGGTVVGVIPESFTAIPEAAHHGLTELHVVHDMHQRKALMAELGDAFIALPGGVGTAEEFFEVLTWSHLGLHNKPCVLLNDNEYYRPLLSYIEHAAVEGFITPATRSRVIVCKDIEGAIAAIRSP</sequence>
<protein>
    <recommendedName>
        <fullName>Cytokinin riboside 5'-monophosphate phosphoribohydrolase</fullName>
        <ecNumber evidence="2">3.2.2.n1</ecNumber>
    </recommendedName>
    <alternativeName>
        <fullName>LOG family protein ORF6 in fasciation locus</fullName>
    </alternativeName>
</protein>
<organism>
    <name type="scientific">Rhodococcoides fascians</name>
    <name type="common">Rhodococcus fascians</name>
    <dbReference type="NCBI Taxonomy" id="1828"/>
    <lineage>
        <taxon>Bacteria</taxon>
        <taxon>Bacillati</taxon>
        <taxon>Actinomycetota</taxon>
        <taxon>Actinomycetes</taxon>
        <taxon>Mycobacteriales</taxon>
        <taxon>Nocardiaceae</taxon>
        <taxon>Rhodococcoides</taxon>
    </lineage>
</organism>
<geneLocation type="plasmid">
    <name>pFiD188</name>
</geneLocation>
<reference key="1">
    <citation type="journal article" date="1994" name="J. Bacteriol.">
        <title>The fas operon of Rhodococcus fascians encodes new genes required for efficient fasciation of host plants.</title>
        <authorList>
            <person name="Crespi M."/>
            <person name="Vereecke D."/>
            <person name="Temmerman W."/>
            <person name="van Montagu M."/>
            <person name="Desomer J."/>
        </authorList>
    </citation>
    <scope>NUCLEOTIDE SEQUENCE [GENOMIC DNA]</scope>
    <scope>INDUCTION</scope>
    <source>
        <strain>D188</strain>
    </source>
</reference>
<evidence type="ECO:0000250" key="1">
    <source>
        <dbReference type="UniProtKB" id="B2HS63"/>
    </source>
</evidence>
<evidence type="ECO:0000250" key="2">
    <source>
        <dbReference type="UniProtKB" id="O05306"/>
    </source>
</evidence>
<evidence type="ECO:0000269" key="3">
    <source>
    </source>
</evidence>
<evidence type="ECO:0000305" key="4"/>
<evidence type="ECO:0000305" key="5">
    <source>
    </source>
</evidence>
<keyword id="KW-0203">Cytokinin biosynthesis</keyword>
<keyword id="KW-0378">Hydrolase</keyword>
<keyword id="KW-0614">Plasmid</keyword>
<gene>
    <name type="primary">fas6</name>
</gene>
<name>LOGH_RHOFA</name>
<proteinExistence type="evidence at transcript level"/>
<feature type="chain" id="PRO_0000087194" description="Cytokinin riboside 5'-monophosphate phosphoribohydrolase">
    <location>
        <begin position="1"/>
        <end position="198"/>
    </location>
</feature>
<feature type="binding site" evidence="1">
    <location>
        <position position="91"/>
    </location>
    <ligand>
        <name>substrate</name>
    </ligand>
</feature>
<feature type="binding site" evidence="1">
    <location>
        <begin position="109"/>
        <end position="110"/>
    </location>
    <ligand>
        <name>substrate</name>
    </ligand>
</feature>
<feature type="binding site" evidence="1">
    <location>
        <begin position="126"/>
        <end position="132"/>
    </location>
    <ligand>
        <name>substrate</name>
    </ligand>
</feature>
<feature type="binding site" evidence="1">
    <location>
        <position position="138"/>
    </location>
    <ligand>
        <name>substrate</name>
    </ligand>
</feature>
<dbReference type="EC" id="3.2.2.n1" evidence="2"/>
<dbReference type="EMBL" id="Z29635">
    <property type="protein sequence ID" value="CAA82746.1"/>
    <property type="molecule type" value="Genomic_DNA"/>
</dbReference>
<dbReference type="PIR" id="F55578">
    <property type="entry name" value="F55578"/>
</dbReference>
<dbReference type="RefSeq" id="WP_015586136.1">
    <property type="nucleotide sequence ID" value="NZ_JOKB01000057.1"/>
</dbReference>
<dbReference type="RefSeq" id="YP_007878709.1">
    <property type="nucleotide sequence ID" value="NC_021080.1"/>
</dbReference>
<dbReference type="SMR" id="P46378"/>
<dbReference type="STRING" id="1443905.GCA_000761075_00035"/>
<dbReference type="eggNOG" id="COG1611">
    <property type="taxonomic scope" value="Bacteria"/>
</dbReference>
<dbReference type="GO" id="GO:0005829">
    <property type="term" value="C:cytosol"/>
    <property type="evidence" value="ECO:0007669"/>
    <property type="project" value="TreeGrafter"/>
</dbReference>
<dbReference type="GO" id="GO:0102682">
    <property type="term" value="F:cytokinin riboside 5'-monophosphate phosphoribohydrolase activity"/>
    <property type="evidence" value="ECO:0007669"/>
    <property type="project" value="RHEA"/>
</dbReference>
<dbReference type="GO" id="GO:0009691">
    <property type="term" value="P:cytokinin biosynthetic process"/>
    <property type="evidence" value="ECO:0007669"/>
    <property type="project" value="UniProtKB-KW"/>
</dbReference>
<dbReference type="Gene3D" id="3.40.50.450">
    <property type="match status" value="1"/>
</dbReference>
<dbReference type="InterPro" id="IPR005269">
    <property type="entry name" value="LOG"/>
</dbReference>
<dbReference type="InterPro" id="IPR031100">
    <property type="entry name" value="LOG_fam"/>
</dbReference>
<dbReference type="NCBIfam" id="TIGR00730">
    <property type="entry name" value="Rossman fold protein, TIGR00730 family"/>
    <property type="match status" value="1"/>
</dbReference>
<dbReference type="PANTHER" id="PTHR31223">
    <property type="entry name" value="LOG FAMILY PROTEIN YJL055W"/>
    <property type="match status" value="1"/>
</dbReference>
<dbReference type="PANTHER" id="PTHR31223:SF70">
    <property type="entry name" value="LOG FAMILY PROTEIN YJL055W"/>
    <property type="match status" value="1"/>
</dbReference>
<dbReference type="Pfam" id="PF03641">
    <property type="entry name" value="Lysine_decarbox"/>
    <property type="match status" value="1"/>
</dbReference>
<dbReference type="SUPFAM" id="SSF102405">
    <property type="entry name" value="MCP/YpsA-like"/>
    <property type="match status" value="1"/>
</dbReference>
<comment type="function">
    <text evidence="2">Catalyzes the hydrolytic removal of ribose 5'-monophosphate from nitrogen N6-modified adenosines, the final step of bioactive cytokinin synthesis.</text>
</comment>
<comment type="catalytic activity">
    <reaction evidence="2">
        <text>N(6)-(dimethylallyl)adenosine 5'-phosphate + H2O = N(6)-dimethylallyladenine + D-ribose 5-phosphate</text>
        <dbReference type="Rhea" id="RHEA:48560"/>
        <dbReference type="ChEBI" id="CHEBI:15377"/>
        <dbReference type="ChEBI" id="CHEBI:17660"/>
        <dbReference type="ChEBI" id="CHEBI:57526"/>
        <dbReference type="ChEBI" id="CHEBI:78346"/>
        <dbReference type="EC" id="3.2.2.n1"/>
    </reaction>
</comment>
<comment type="catalytic activity">
    <reaction evidence="2">
        <text>9-ribosyl-trans-zeatin 5'-phosphate + H2O = trans-zeatin + D-ribose 5-phosphate</text>
        <dbReference type="Rhea" id="RHEA:48564"/>
        <dbReference type="ChEBI" id="CHEBI:15377"/>
        <dbReference type="ChEBI" id="CHEBI:16522"/>
        <dbReference type="ChEBI" id="CHEBI:78346"/>
        <dbReference type="ChEBI" id="CHEBI:87947"/>
        <dbReference type="EC" id="3.2.2.n1"/>
    </reaction>
</comment>
<comment type="induction">
    <text evidence="3">During the interaction with host plants.</text>
</comment>
<comment type="miscellaneous">
    <text evidence="5">The FAS-operon encodes genes involved in cytokinin production and in host plant fasciation (leafy gall).</text>
</comment>
<comment type="similarity">
    <text evidence="4">Belongs to the LOG family.</text>
</comment>